<organism>
    <name type="scientific">Arabidopsis thaliana</name>
    <name type="common">Mouse-ear cress</name>
    <dbReference type="NCBI Taxonomy" id="3702"/>
    <lineage>
        <taxon>Eukaryota</taxon>
        <taxon>Viridiplantae</taxon>
        <taxon>Streptophyta</taxon>
        <taxon>Embryophyta</taxon>
        <taxon>Tracheophyta</taxon>
        <taxon>Spermatophyta</taxon>
        <taxon>Magnoliopsida</taxon>
        <taxon>eudicotyledons</taxon>
        <taxon>Gunneridae</taxon>
        <taxon>Pentapetalae</taxon>
        <taxon>rosids</taxon>
        <taxon>malvids</taxon>
        <taxon>Brassicales</taxon>
        <taxon>Brassicaceae</taxon>
        <taxon>Camelineae</taxon>
        <taxon>Arabidopsis</taxon>
    </lineage>
</organism>
<gene>
    <name evidence="11" type="primary">ETR2</name>
    <name evidence="14" type="ordered locus">At3g23150</name>
    <name evidence="15" type="ORF">K14B15.9</name>
</gene>
<reference key="1">
    <citation type="journal article" date="1998" name="Proc. Natl. Acad. Sci. U.S.A.">
        <title>ETR2 is an ETR1-like gene involved in ethylene signaling in Arabidopsis.</title>
        <authorList>
            <person name="Sakai H."/>
            <person name="Hua J."/>
            <person name="Chen Q.G."/>
            <person name="Chang C."/>
            <person name="Medrano L.J."/>
            <person name="Bleecker A.B."/>
            <person name="Meyerowitz E.M."/>
        </authorList>
    </citation>
    <scope>NUCLEOTIDE SEQUENCE [GENOMIC DNA]</scope>
    <scope>MUTAGENESIS OF PRO-66</scope>
    <scope>INDUCTION BY ETHYLENE</scope>
    <scope>TISSUE SPECIFICITY</scope>
    <source>
        <strain>cv. Landsberg erecta</strain>
    </source>
</reference>
<reference key="2">
    <citation type="journal article" date="2000" name="DNA Res.">
        <title>Structural analysis of Arabidopsis thaliana chromosome 3. I. Sequence features of the regions of 4,504,864 bp covered by sixty P1 and TAC clones.</title>
        <authorList>
            <person name="Sato S."/>
            <person name="Nakamura Y."/>
            <person name="Kaneko T."/>
            <person name="Katoh T."/>
            <person name="Asamizu E."/>
            <person name="Tabata S."/>
        </authorList>
    </citation>
    <scope>NUCLEOTIDE SEQUENCE [LARGE SCALE GENOMIC DNA]</scope>
    <source>
        <strain>cv. Columbia</strain>
    </source>
</reference>
<reference key="3">
    <citation type="journal article" date="2017" name="Plant J.">
        <title>Araport11: a complete reannotation of the Arabidopsis thaliana reference genome.</title>
        <authorList>
            <person name="Cheng C.Y."/>
            <person name="Krishnakumar V."/>
            <person name="Chan A.P."/>
            <person name="Thibaud-Nissen F."/>
            <person name="Schobel S."/>
            <person name="Town C.D."/>
        </authorList>
    </citation>
    <scope>GENOME REANNOTATION</scope>
    <source>
        <strain>cv. Columbia</strain>
    </source>
</reference>
<reference key="4">
    <citation type="submission" date="2006-07" db="EMBL/GenBank/DDBJ databases">
        <title>Large-scale analysis of RIKEN Arabidopsis full-length (RAFL) cDNAs.</title>
        <authorList>
            <person name="Totoki Y."/>
            <person name="Seki M."/>
            <person name="Ishida J."/>
            <person name="Nakajima M."/>
            <person name="Enju A."/>
            <person name="Kamiya A."/>
            <person name="Narusaka M."/>
            <person name="Shin-i T."/>
            <person name="Nakagawa M."/>
            <person name="Sakamoto N."/>
            <person name="Oishi K."/>
            <person name="Kohara Y."/>
            <person name="Kobayashi M."/>
            <person name="Toyoda A."/>
            <person name="Sakaki Y."/>
            <person name="Sakurai T."/>
            <person name="Iida K."/>
            <person name="Akiyama K."/>
            <person name="Satou M."/>
            <person name="Toyoda T."/>
            <person name="Konagaya A."/>
            <person name="Carninci P."/>
            <person name="Kawai J."/>
            <person name="Hayashizaki Y."/>
            <person name="Shinozaki K."/>
        </authorList>
    </citation>
    <scope>NUCLEOTIDE SEQUENCE [LARGE SCALE MRNA]</scope>
    <source>
        <strain>cv. Columbia</strain>
    </source>
</reference>
<reference key="5">
    <citation type="journal article" date="1998" name="Plant Cell">
        <title>EIN4 and ERS2 are members of the putative ethylene receptor gene family in Arabidopsis.</title>
        <authorList>
            <person name="Hua J."/>
            <person name="Sakai H."/>
            <person name="Nourizadeh S."/>
            <person name="Chen Q.G."/>
            <person name="Bleecker A.B."/>
            <person name="Ecker J.R."/>
            <person name="Meyerowitz E.M."/>
        </authorList>
    </citation>
    <scope>TISSUE SPECIFICITY</scope>
</reference>
<reference key="6">
    <citation type="journal article" date="2004" name="J. Biol. Chem.">
        <title>Autophosphorylation activity of the Arabidopsis ethylene receptor multigene family.</title>
        <authorList>
            <person name="Moussatche P."/>
            <person name="Klee H.J."/>
        </authorList>
    </citation>
    <scope>PHOSPHORYLATION</scope>
</reference>
<reference key="7">
    <citation type="journal article" date="2005" name="Plant J.">
        <title>Ethylene-binding activity, gene expression levels, and receptor system output for ethylene receptor family members from Arabidopsis and tomato.</title>
        <authorList>
            <person name="O'Malley R.C."/>
            <person name="Rodriguez F.I."/>
            <person name="Esch J.J."/>
            <person name="Binder B.M."/>
            <person name="O'Donnell P."/>
            <person name="Klee H.J."/>
            <person name="Bleecker A.B."/>
        </authorList>
    </citation>
    <scope>FUNCTION</scope>
</reference>
<reference key="8">
    <citation type="journal article" date="2007" name="J. Biol. Chem.">
        <title>Ligand-induced degradation of the ethylene receptor ETR2 through a proteasome-dependent pathway in Arabidopsis.</title>
        <authorList>
            <person name="Chen Y.-F."/>
            <person name="Shakeel S.N."/>
            <person name="Bowers J."/>
            <person name="Zhao X.-C."/>
            <person name="Etheridge N."/>
            <person name="Schaller G.E."/>
        </authorList>
    </citation>
    <scope>INDUCTION BY ETHYLENE</scope>
    <scope>SUBCELLULAR LOCATION</scope>
    <scope>DEGRADATION</scope>
</reference>
<reference key="9">
    <citation type="journal article" date="2007" name="Mol. Cell. Proteomics">
        <title>Multidimensional protein identification technology (MudPIT) analysis of ubiquitinated proteins in plants.</title>
        <authorList>
            <person name="Maor R."/>
            <person name="Jones A."/>
            <person name="Nuehse T.S."/>
            <person name="Studholme D.J."/>
            <person name="Peck S.C."/>
            <person name="Shirasu K."/>
        </authorList>
    </citation>
    <scope>UBIQUITINATION [LARGE SCALE ANALYSIS] AT LYS-751</scope>
    <scope>IDENTIFICATION BY MASS SPECTROMETRY [LARGE SCALE ANALYSIS]</scope>
    <source>
        <strain>cv. Landsberg erecta</strain>
    </source>
</reference>
<reference key="10">
    <citation type="journal article" date="2008" name="J. Biol. Chem.">
        <title>Heteromeric interactions among ethylene receptors mediate signaling in Arabidopsis.</title>
        <authorList>
            <person name="Gao Z."/>
            <person name="Wen C.-K."/>
            <person name="Binder B.M."/>
            <person name="Chen Y.-F."/>
            <person name="Chang J."/>
            <person name="Chiang Y.-H."/>
            <person name="Kerris R.J. III"/>
            <person name="Chang C."/>
            <person name="Schaller G.E."/>
        </authorList>
    </citation>
    <scope>INTERACTION WITH ETR1</scope>
    <scope>INDUCTION BY ETHYLENE</scope>
</reference>
<reference key="11">
    <citation type="journal article" date="2011" name="Plant Cell Environ.">
        <title>EIN2 regulates salt stress response and interacts with a MA3 domain-containing protein ECIP1 in Arabidopsis.</title>
        <authorList>
            <person name="Lei G."/>
            <person name="Shen M."/>
            <person name="Li Z.G."/>
            <person name="Zhang B."/>
            <person name="Duan K.X."/>
            <person name="Wang N."/>
            <person name="Cao Y.R."/>
            <person name="Zhang W.K."/>
            <person name="Ma B."/>
            <person name="Ling H.Q."/>
            <person name="Chen S.Y."/>
            <person name="Zhang J.S."/>
        </authorList>
    </citation>
    <scope>INTERACTION WITH MRF3/ECIP1</scope>
    <source>
        <strain>cv. Columbia</strain>
    </source>
</reference>
<reference key="12">
    <citation type="journal article" date="2015" name="Sci. Rep.">
        <title>Three SAUR proteins SAUR76, SAUR77 and SAUR78 promote plant growth in Arabidopsis.</title>
        <authorList>
            <person name="Li Z.G."/>
            <person name="Chen H.W."/>
            <person name="Li Q.T."/>
            <person name="Tao J.J."/>
            <person name="Bian X.H."/>
            <person name="Ma B."/>
            <person name="Zhang W.K."/>
            <person name="Chen S.Y."/>
            <person name="Zhang J.S."/>
        </authorList>
    </citation>
    <scope>RETRACTED PAPER</scope>
</reference>
<reference key="13">
    <citation type="journal article" date="2022" name="Sci. Rep.">
        <authorList>
            <person name="Li Z.G."/>
            <person name="Chen H.W."/>
            <person name="Li Q.T."/>
            <person name="Tao J.J."/>
            <person name="Bian X.H."/>
            <person name="Ma B."/>
            <person name="Zhang W.K."/>
            <person name="Chen S.Y."/>
            <person name="Zhang J.S."/>
        </authorList>
    </citation>
    <scope>RETRACTION NOTICE OF PUBMED:26207341</scope>
</reference>
<proteinExistence type="evidence at protein level"/>
<name>ETR2_ARATH</name>
<keyword id="KW-0067">ATP-binding</keyword>
<keyword id="KW-0186">Copper</keyword>
<keyword id="KW-1015">Disulfide bond</keyword>
<keyword id="KW-0256">Endoplasmic reticulum</keyword>
<keyword id="KW-0936">Ethylene signaling pathway</keyword>
<keyword id="KW-1017">Isopeptide bond</keyword>
<keyword id="KW-0418">Kinase</keyword>
<keyword id="KW-0472">Membrane</keyword>
<keyword id="KW-0479">Metal-binding</keyword>
<keyword id="KW-0547">Nucleotide-binding</keyword>
<keyword id="KW-0597">Phosphoprotein</keyword>
<keyword id="KW-0675">Receptor</keyword>
<keyword id="KW-1185">Reference proteome</keyword>
<keyword id="KW-0723">Serine/threonine-protein kinase</keyword>
<keyword id="KW-0808">Transferase</keyword>
<keyword id="KW-0812">Transmembrane</keyword>
<keyword id="KW-1133">Transmembrane helix</keyword>
<keyword id="KW-0902">Two-component regulatory system</keyword>
<keyword id="KW-0832">Ubl conjugation</keyword>
<comment type="function">
    <text evidence="5">Ethylene receptor related to bacterial two-component regulators. Acts as a redundant negative regulator of ethylene signaling.</text>
</comment>
<comment type="cofactor">
    <cofactor evidence="1">
        <name>Cu cation</name>
        <dbReference type="ChEBI" id="CHEBI:23378"/>
    </cofactor>
    <text evidence="1">Binds 1 copper ion per dimer.</text>
</comment>
<comment type="subunit">
    <text evidence="7 8">Heteromer with ETR1 (PubMed:18577522). Binds to MRF3/ECIP1 (PubMed:21631530).</text>
</comment>
<comment type="interaction">
    <interactant intactId="EBI-1787533">
        <id>Q0WPQ2</id>
    </interactant>
    <interactant intactId="EBI-1606697">
        <id>Q05609</id>
        <label>CTR1</label>
    </interactant>
    <organismsDiffer>false</organismsDiffer>
    <experiments>2</experiments>
</comment>
<comment type="interaction">
    <interactant intactId="EBI-1787533">
        <id>Q0WPQ2</id>
    </interactant>
    <interactant intactId="EBI-1606682">
        <id>P49333</id>
        <label>ETR1</label>
    </interactant>
    <organismsDiffer>false</organismsDiffer>
    <experiments>2</experiments>
</comment>
<comment type="subcellular location">
    <subcellularLocation>
        <location evidence="6">Endoplasmic reticulum membrane</location>
        <topology evidence="6">Multi-pass membrane protein</topology>
    </subcellularLocation>
</comment>
<comment type="tissue specificity">
    <text evidence="9 10">Expressed in seedlings, roots, leaves, flowers, mature siliques, shoot apical meristems, leaf primordia, inflorescence meristems, young floral meristems, developing petals, carpels and ovules. Low expression in stamens.</text>
</comment>
<comment type="induction">
    <text evidence="6 7 9">By ethylene.</text>
</comment>
<comment type="domain">
    <text>The GAF domain is sufficient to mediate heteromerization.</text>
</comment>
<comment type="PTM">
    <text evidence="4">Autophosphorylated predominantly on Ser residues.</text>
</comment>
<comment type="miscellaneous">
    <text>ETR2 is degraded by a proteasome-dependent pathway in response to ethylene binding.</text>
</comment>
<comment type="similarity">
    <text evidence="12">Belongs to the ethylene receptor family.</text>
</comment>
<comment type="caution">
    <text evidence="13">The article by Li et al was retracted by the editors after publication. Concerns were raised regarding a number of figure panels, such as partial overlap between the panels and duplication of protein gel analysis.</text>
</comment>
<comment type="sequence caution" evidence="12">
    <conflict type="erroneous gene model prediction">
        <sequence resource="EMBL-CDS" id="BAA95726"/>
    </conflict>
</comment>
<accession>Q0WPQ2</accession>
<accession>O82429</accession>
<accession>Q9LTD5</accession>
<evidence type="ECO:0000250" key="1"/>
<evidence type="ECO:0000255" key="2"/>
<evidence type="ECO:0000255" key="3">
    <source>
        <dbReference type="PROSITE-ProRule" id="PRU00169"/>
    </source>
</evidence>
<evidence type="ECO:0000269" key="4">
    <source>
    </source>
</evidence>
<evidence type="ECO:0000269" key="5">
    <source>
    </source>
</evidence>
<evidence type="ECO:0000269" key="6">
    <source>
    </source>
</evidence>
<evidence type="ECO:0000269" key="7">
    <source>
    </source>
</evidence>
<evidence type="ECO:0000269" key="8">
    <source>
    </source>
</evidence>
<evidence type="ECO:0000269" key="9">
    <source>
    </source>
</evidence>
<evidence type="ECO:0000269" key="10">
    <source>
    </source>
</evidence>
<evidence type="ECO:0000303" key="11">
    <source>
    </source>
</evidence>
<evidence type="ECO:0000305" key="12"/>
<evidence type="ECO:0000305" key="13">
    <source>
    </source>
</evidence>
<evidence type="ECO:0000312" key="14">
    <source>
        <dbReference type="Araport" id="AT3G23150"/>
    </source>
</evidence>
<evidence type="ECO:0000312" key="15">
    <source>
        <dbReference type="EMBL" id="BAA95726.1"/>
    </source>
</evidence>
<evidence type="ECO:0007744" key="16">
    <source>
    </source>
</evidence>
<sequence>MVKEIASWLLILSMVVFVSPVLAINGGGYPRCNCEDEGNSFWSTENILETQRVSDFLIAVAYFSIPIELLYFVSCSNVPFKWVLFEFIAFIVLCGMTHLLHGWTYSAHPFRLMMAFTVFKMLTALVSCATAITLITLIPLLLKVKVREFMLKKKAHELGREVGLILIKKETGFHVRMLTQEIRKSLDRHTILYTTLVELSKTLGLQNCAVWMPNDGGTEMDLTHELRGRGGYGGCSVSMEDLDVVRIRESDEVNVLSVDSSIARASGGGGDVSEIGAVAAIRMPMLRVSDFNGELSYAILVCVLPGGTPRDWTYQEIEIVKVVADQVTVALDHAAVLEESQLMREKLAEQNRALQMAKRDALRASQARNAFQKTMSEGMRRPMHSILGLLSMIQDEKLSDEQKMIVDTMVKTGNVMSNLVGDSMDVPDGRFGTEMKPFSLHRTIHEAACMARCLCLCNGIRFLVDAEKSLPDNVVGDERRVFQVILHIVGSLVKPRKRQEGSSLMFKVLKERGSLDRSDHRWAAWRSPASSADGDVYIRFEMNVENDDSSSQSFASVSSRDQEVGDVRFSGGYGLGQDLSFGVCKKVVQLIHGNISVVPGSDGSPETMSLLLRFRRRPSISVHGSSESPAPDHHAHPHSNSLLRGLQVLLVDTNDSNRAVTRKLLEKLGCDVTAVSSGFDCLTAIAPGSSSPSTSFQVVVLDLQMAEMDGYEVAMRIRSRSWPLIVATTVSLDEEMWDKCAQIGINGVVRKPVVLRAMESELRRVLLQADQLL</sequence>
<dbReference type="EC" id="2.7.11.-"/>
<dbReference type="EMBL" id="AF047975">
    <property type="protein sequence ID" value="AAC62208.1"/>
    <property type="molecule type" value="Genomic_DNA"/>
</dbReference>
<dbReference type="EMBL" id="AB025608">
    <property type="protein sequence ID" value="BAA95726.1"/>
    <property type="status" value="ALT_SEQ"/>
    <property type="molecule type" value="Genomic_DNA"/>
</dbReference>
<dbReference type="EMBL" id="CP002686">
    <property type="protein sequence ID" value="AEE76724.1"/>
    <property type="molecule type" value="Genomic_DNA"/>
</dbReference>
<dbReference type="EMBL" id="AK229010">
    <property type="protein sequence ID" value="BAF00897.1"/>
    <property type="molecule type" value="mRNA"/>
</dbReference>
<dbReference type="RefSeq" id="NP_001326955.1">
    <property type="nucleotide sequence ID" value="NM_001338618.1"/>
</dbReference>
<dbReference type="RefSeq" id="NP_188956.1">
    <property type="nucleotide sequence ID" value="NM_113216.3"/>
</dbReference>
<dbReference type="SMR" id="Q0WPQ2"/>
<dbReference type="BioGRID" id="7223">
    <property type="interactions" value="30"/>
</dbReference>
<dbReference type="FunCoup" id="Q0WPQ2">
    <property type="interactions" value="381"/>
</dbReference>
<dbReference type="IntAct" id="Q0WPQ2">
    <property type="interactions" value="14"/>
</dbReference>
<dbReference type="STRING" id="3702.Q0WPQ2"/>
<dbReference type="iPTMnet" id="Q0WPQ2"/>
<dbReference type="PaxDb" id="3702-AT3G23150.1"/>
<dbReference type="ProteomicsDB" id="222327"/>
<dbReference type="EnsemblPlants" id="AT3G23150.1">
    <property type="protein sequence ID" value="AT3G23150.1"/>
    <property type="gene ID" value="AT3G23150"/>
</dbReference>
<dbReference type="GeneID" id="821891"/>
<dbReference type="Gramene" id="AT3G23150.1">
    <property type="protein sequence ID" value="AT3G23150.1"/>
    <property type="gene ID" value="AT3G23150"/>
</dbReference>
<dbReference type="KEGG" id="ath:AT3G23150"/>
<dbReference type="Araport" id="AT3G23150"/>
<dbReference type="TAIR" id="AT3G23150">
    <property type="gene designation" value="ETR2"/>
</dbReference>
<dbReference type="eggNOG" id="KOG0519">
    <property type="taxonomic scope" value="Eukaryota"/>
</dbReference>
<dbReference type="HOGENOM" id="CLU_000445_114_48_1"/>
<dbReference type="InParanoid" id="Q0WPQ2"/>
<dbReference type="OMA" id="YCAVWMP"/>
<dbReference type="PRO" id="PR:Q0WPQ2"/>
<dbReference type="Proteomes" id="UP000006548">
    <property type="component" value="Chromosome 3"/>
</dbReference>
<dbReference type="ExpressionAtlas" id="Q0WPQ2">
    <property type="expression patterns" value="baseline and differential"/>
</dbReference>
<dbReference type="GO" id="GO:0005783">
    <property type="term" value="C:endoplasmic reticulum"/>
    <property type="evidence" value="ECO:0000314"/>
    <property type="project" value="TAIR"/>
</dbReference>
<dbReference type="GO" id="GO:0005789">
    <property type="term" value="C:endoplasmic reticulum membrane"/>
    <property type="evidence" value="ECO:0007669"/>
    <property type="project" value="UniProtKB-SubCell"/>
</dbReference>
<dbReference type="GO" id="GO:0005524">
    <property type="term" value="F:ATP binding"/>
    <property type="evidence" value="ECO:0007669"/>
    <property type="project" value="UniProtKB-KW"/>
</dbReference>
<dbReference type="GO" id="GO:0051740">
    <property type="term" value="F:ethylene binding"/>
    <property type="evidence" value="ECO:0000314"/>
    <property type="project" value="TAIR"/>
</dbReference>
<dbReference type="GO" id="GO:0038199">
    <property type="term" value="F:ethylene receptor activity"/>
    <property type="evidence" value="ECO:0007669"/>
    <property type="project" value="InterPro"/>
</dbReference>
<dbReference type="GO" id="GO:0046872">
    <property type="term" value="F:metal ion binding"/>
    <property type="evidence" value="ECO:0007669"/>
    <property type="project" value="UniProtKB-KW"/>
</dbReference>
<dbReference type="GO" id="GO:0000155">
    <property type="term" value="F:phosphorelay sensor kinase activity"/>
    <property type="evidence" value="ECO:0007669"/>
    <property type="project" value="InterPro"/>
</dbReference>
<dbReference type="GO" id="GO:0004674">
    <property type="term" value="F:protein serine/threonine kinase activity"/>
    <property type="evidence" value="ECO:0000304"/>
    <property type="project" value="TAIR"/>
</dbReference>
<dbReference type="GO" id="GO:0071456">
    <property type="term" value="P:cellular response to hypoxia"/>
    <property type="evidence" value="ECO:0007007"/>
    <property type="project" value="TAIR"/>
</dbReference>
<dbReference type="GO" id="GO:0010105">
    <property type="term" value="P:negative regulation of ethylene-activated signaling pathway"/>
    <property type="evidence" value="ECO:0000304"/>
    <property type="project" value="TAIR"/>
</dbReference>
<dbReference type="CDD" id="cd16938">
    <property type="entry name" value="HATPase_ETR2_ERS2-EIN4-like"/>
    <property type="match status" value="1"/>
</dbReference>
<dbReference type="CDD" id="cd00082">
    <property type="entry name" value="HisKA"/>
    <property type="match status" value="1"/>
</dbReference>
<dbReference type="CDD" id="cd19933">
    <property type="entry name" value="REC_ETR-like"/>
    <property type="match status" value="1"/>
</dbReference>
<dbReference type="FunFam" id="3.40.50.2300:FF:000240">
    <property type="entry name" value="Ethylene receptor"/>
    <property type="match status" value="1"/>
</dbReference>
<dbReference type="FunFam" id="1.10.287.130:FF:000087">
    <property type="entry name" value="Ethylene receptor 4"/>
    <property type="match status" value="1"/>
</dbReference>
<dbReference type="Gene3D" id="1.10.287.130">
    <property type="match status" value="1"/>
</dbReference>
<dbReference type="Gene3D" id="3.30.450.40">
    <property type="match status" value="1"/>
</dbReference>
<dbReference type="Gene3D" id="3.40.50.2300">
    <property type="match status" value="1"/>
</dbReference>
<dbReference type="Gene3D" id="3.30.565.10">
    <property type="entry name" value="Histidine kinase-like ATPase, C-terminal domain"/>
    <property type="match status" value="1"/>
</dbReference>
<dbReference type="InterPro" id="IPR011006">
    <property type="entry name" value="CheY-like_superfamily"/>
</dbReference>
<dbReference type="InterPro" id="IPR014525">
    <property type="entry name" value="ETR"/>
</dbReference>
<dbReference type="InterPro" id="IPR003018">
    <property type="entry name" value="GAF"/>
</dbReference>
<dbReference type="InterPro" id="IPR029016">
    <property type="entry name" value="GAF-like_dom_sf"/>
</dbReference>
<dbReference type="InterPro" id="IPR036890">
    <property type="entry name" value="HATPase_C_sf"/>
</dbReference>
<dbReference type="InterPro" id="IPR003661">
    <property type="entry name" value="HisK_dim/P_dom"/>
</dbReference>
<dbReference type="InterPro" id="IPR036097">
    <property type="entry name" value="HisK_dim/P_sf"/>
</dbReference>
<dbReference type="InterPro" id="IPR001789">
    <property type="entry name" value="Sig_transdc_resp-reg_receiver"/>
</dbReference>
<dbReference type="PANTHER" id="PTHR24423:SF633">
    <property type="entry name" value="ETHYLENE RECEPTOR 2"/>
    <property type="match status" value="1"/>
</dbReference>
<dbReference type="PANTHER" id="PTHR24423">
    <property type="entry name" value="TWO-COMPONENT SENSOR HISTIDINE KINASE"/>
    <property type="match status" value="1"/>
</dbReference>
<dbReference type="Pfam" id="PF25487">
    <property type="entry name" value="ETR1_N"/>
    <property type="match status" value="1"/>
</dbReference>
<dbReference type="Pfam" id="PF01590">
    <property type="entry name" value="GAF"/>
    <property type="match status" value="1"/>
</dbReference>
<dbReference type="Pfam" id="PF00512">
    <property type="entry name" value="HisKA"/>
    <property type="match status" value="1"/>
</dbReference>
<dbReference type="Pfam" id="PF00072">
    <property type="entry name" value="Response_reg"/>
    <property type="match status" value="1"/>
</dbReference>
<dbReference type="PIRSF" id="PIRSF026389">
    <property type="entry name" value="Ethyln_sen_HK"/>
    <property type="match status" value="1"/>
</dbReference>
<dbReference type="SMART" id="SM00065">
    <property type="entry name" value="GAF"/>
    <property type="match status" value="1"/>
</dbReference>
<dbReference type="SMART" id="SM00388">
    <property type="entry name" value="HisKA"/>
    <property type="match status" value="1"/>
</dbReference>
<dbReference type="SMART" id="SM00448">
    <property type="entry name" value="REC"/>
    <property type="match status" value="1"/>
</dbReference>
<dbReference type="SUPFAM" id="SSF52172">
    <property type="entry name" value="CheY-like"/>
    <property type="match status" value="1"/>
</dbReference>
<dbReference type="SUPFAM" id="SSF55781">
    <property type="entry name" value="GAF domain-like"/>
    <property type="match status" value="1"/>
</dbReference>
<dbReference type="SUPFAM" id="SSF47384">
    <property type="entry name" value="Homodimeric domain of signal transducing histidine kinase"/>
    <property type="match status" value="1"/>
</dbReference>
<dbReference type="PROSITE" id="PS50110">
    <property type="entry name" value="RESPONSE_REGULATORY"/>
    <property type="match status" value="1"/>
</dbReference>
<feature type="chain" id="PRO_0000378141" description="Ethylene receptor 2">
    <location>
        <begin position="1"/>
        <end position="773"/>
    </location>
</feature>
<feature type="transmembrane region" description="Helical" evidence="2">
    <location>
        <begin position="4"/>
        <end position="24"/>
    </location>
</feature>
<feature type="transmembrane region" description="Helical" evidence="2">
    <location>
        <begin position="53"/>
        <end position="73"/>
    </location>
</feature>
<feature type="transmembrane region" description="Helical" evidence="2">
    <location>
        <begin position="82"/>
        <end position="102"/>
    </location>
</feature>
<feature type="transmembrane region" description="Helical" evidence="2">
    <location>
        <begin position="122"/>
        <end position="142"/>
    </location>
</feature>
<feature type="domain" description="GAF">
    <location>
        <begin position="187"/>
        <end position="331"/>
    </location>
</feature>
<feature type="domain" description="Histidine kinase">
    <location>
        <begin position="374"/>
        <end position="614"/>
    </location>
</feature>
<feature type="domain" description="Response regulatory" evidence="3">
    <location>
        <begin position="647"/>
        <end position="766"/>
    </location>
</feature>
<feature type="binding site" evidence="1">
    <location>
        <position position="94"/>
    </location>
    <ligand>
        <name>Cu cation</name>
        <dbReference type="ChEBI" id="CHEBI:23378"/>
    </ligand>
</feature>
<feature type="binding site" evidence="1">
    <location>
        <position position="98"/>
    </location>
    <ligand>
        <name>Cu cation</name>
        <dbReference type="ChEBI" id="CHEBI:23378"/>
    </ligand>
</feature>
<feature type="modified residue" description="4-aspartylphosphate" evidence="3">
    <location>
        <position position="702"/>
    </location>
</feature>
<feature type="disulfide bond" description="Interchain" evidence="1">
    <location>
        <position position="32"/>
    </location>
</feature>
<feature type="disulfide bond" description="Interchain" evidence="1">
    <location>
        <position position="34"/>
    </location>
</feature>
<feature type="cross-link" description="Glycyl lysine isopeptide (Lys-Gly) (interchain with G-Cter in ubiquitin)" evidence="16">
    <location>
        <position position="751"/>
    </location>
</feature>
<feature type="mutagenesis site" description="In etr2-1; ehtylene insensitivity." evidence="9">
    <original>P</original>
    <variation>L</variation>
    <location>
        <position position="66"/>
    </location>
</feature>
<feature type="sequence conflict" description="In Ref. 1; AAC62208." evidence="12" ref="1">
    <original>I</original>
    <variation>M</variation>
    <location>
        <position position="488"/>
    </location>
</feature>
<feature type="sequence conflict" description="In Ref. 4; BAF00897." evidence="12" ref="4">
    <original>N</original>
    <variation>Y</variation>
    <location>
        <position position="594"/>
    </location>
</feature>
<protein>
    <recommendedName>
        <fullName evidence="11">Ethylene receptor 2</fullName>
        <shortName evidence="11">AtETR2</shortName>
        <ecNumber>2.7.11.-</ecNumber>
    </recommendedName>
    <alternativeName>
        <fullName evidence="11">Protein ETHYLENE RESPONSE 2</fullName>
    </alternativeName>
    <alternativeName>
        <fullName evidence="11">Protein ETR2</fullName>
    </alternativeName>
</protein>